<organism>
    <name type="scientific">Burkholderia orbicola (strain AU 1054)</name>
    <dbReference type="NCBI Taxonomy" id="331271"/>
    <lineage>
        <taxon>Bacteria</taxon>
        <taxon>Pseudomonadati</taxon>
        <taxon>Pseudomonadota</taxon>
        <taxon>Betaproteobacteria</taxon>
        <taxon>Burkholderiales</taxon>
        <taxon>Burkholderiaceae</taxon>
        <taxon>Burkholderia</taxon>
        <taxon>Burkholderia cepacia complex</taxon>
        <taxon>Burkholderia orbicola</taxon>
    </lineage>
</organism>
<keyword id="KW-0067">ATP-binding</keyword>
<keyword id="KW-0119">Carbohydrate metabolism</keyword>
<keyword id="KW-0418">Kinase</keyword>
<keyword id="KW-0547">Nucleotide-binding</keyword>
<keyword id="KW-0808">Transferase</keyword>
<dbReference type="EC" id="2.7.1.170" evidence="1"/>
<dbReference type="EMBL" id="CP000378">
    <property type="protein sequence ID" value="ABF75113.1"/>
    <property type="molecule type" value="Genomic_DNA"/>
</dbReference>
<dbReference type="SMR" id="Q1BZ42"/>
<dbReference type="HOGENOM" id="CLU_038782_0_0_4"/>
<dbReference type="UniPathway" id="UPA00343"/>
<dbReference type="UniPathway" id="UPA00544"/>
<dbReference type="GO" id="GO:0005524">
    <property type="term" value="F:ATP binding"/>
    <property type="evidence" value="ECO:0007669"/>
    <property type="project" value="UniProtKB-UniRule"/>
</dbReference>
<dbReference type="GO" id="GO:0016301">
    <property type="term" value="F:kinase activity"/>
    <property type="evidence" value="ECO:0007669"/>
    <property type="project" value="UniProtKB-KW"/>
</dbReference>
<dbReference type="GO" id="GO:0016773">
    <property type="term" value="F:phosphotransferase activity, alcohol group as acceptor"/>
    <property type="evidence" value="ECO:0007669"/>
    <property type="project" value="UniProtKB-UniRule"/>
</dbReference>
<dbReference type="GO" id="GO:0097175">
    <property type="term" value="P:1,6-anhydro-N-acetyl-beta-muramic acid catabolic process"/>
    <property type="evidence" value="ECO:0007669"/>
    <property type="project" value="UniProtKB-UniRule"/>
</dbReference>
<dbReference type="GO" id="GO:0006040">
    <property type="term" value="P:amino sugar metabolic process"/>
    <property type="evidence" value="ECO:0007669"/>
    <property type="project" value="InterPro"/>
</dbReference>
<dbReference type="GO" id="GO:0009254">
    <property type="term" value="P:peptidoglycan turnover"/>
    <property type="evidence" value="ECO:0007669"/>
    <property type="project" value="UniProtKB-UniRule"/>
</dbReference>
<dbReference type="CDD" id="cd24050">
    <property type="entry name" value="ASKHA_NBD_ANMK"/>
    <property type="match status" value="1"/>
</dbReference>
<dbReference type="Gene3D" id="3.30.420.40">
    <property type="match status" value="2"/>
</dbReference>
<dbReference type="HAMAP" id="MF_01270">
    <property type="entry name" value="AnhMurNAc_kinase"/>
    <property type="match status" value="1"/>
</dbReference>
<dbReference type="InterPro" id="IPR005338">
    <property type="entry name" value="Anhydro_N_Ac-Mur_kinase"/>
</dbReference>
<dbReference type="InterPro" id="IPR043129">
    <property type="entry name" value="ATPase_NBD"/>
</dbReference>
<dbReference type="NCBIfam" id="NF007139">
    <property type="entry name" value="PRK09585.1-3"/>
    <property type="match status" value="1"/>
</dbReference>
<dbReference type="NCBIfam" id="NF007140">
    <property type="entry name" value="PRK09585.1-4"/>
    <property type="match status" value="1"/>
</dbReference>
<dbReference type="PANTHER" id="PTHR30605">
    <property type="entry name" value="ANHYDRO-N-ACETYLMURAMIC ACID KINASE"/>
    <property type="match status" value="1"/>
</dbReference>
<dbReference type="PANTHER" id="PTHR30605:SF0">
    <property type="entry name" value="ANHYDRO-N-ACETYLMURAMIC ACID KINASE"/>
    <property type="match status" value="1"/>
</dbReference>
<dbReference type="Pfam" id="PF03702">
    <property type="entry name" value="AnmK"/>
    <property type="match status" value="1"/>
</dbReference>
<dbReference type="SUPFAM" id="SSF53067">
    <property type="entry name" value="Actin-like ATPase domain"/>
    <property type="match status" value="1"/>
</dbReference>
<sequence>MPQRQPQPAHPVDGIYFGLMSGTSMDGVDGVAVRFEAGRAPVVLAEAFVGFAQSLRDALFALQQPGDNEIDRESLAANALVARYAVCCHELQRTAGLSRDEIRAIGVHGQTVRHRPERGYTRQLNNPALLAELTQVDVIADFRSRDVAAGGHGAPLAPAFHATVFGAPGETRVVCNLGGISNITILPGADGDVRGFDCGPANALIDAWATRHLGKPYDDGGKFAARGTVQASLLGALLDEPYFTAPPPKSTGRDLFNPAWLDARLAAFPQVAPEDVQATLTALTAVSVAREIAQHAPGCKAVFVCGGGARNPVLLDALRHALREAGVPATVDTTAALGVPPQQVEALAFAWLAYRFTARQPGNLATVTGAAGNRVLGALYPR</sequence>
<protein>
    <recommendedName>
        <fullName evidence="1">Anhydro-N-acetylmuramic acid kinase</fullName>
        <ecNumber evidence="1">2.7.1.170</ecNumber>
    </recommendedName>
    <alternativeName>
        <fullName evidence="1">AnhMurNAc kinase</fullName>
    </alternativeName>
</protein>
<feature type="chain" id="PRO_0000249984" description="Anhydro-N-acetylmuramic acid kinase">
    <location>
        <begin position="1"/>
        <end position="382"/>
    </location>
</feature>
<feature type="binding site" evidence="1">
    <location>
        <begin position="22"/>
        <end position="29"/>
    </location>
    <ligand>
        <name>ATP</name>
        <dbReference type="ChEBI" id="CHEBI:30616"/>
    </ligand>
</feature>
<name>ANMK_BURO1</name>
<gene>
    <name evidence="1" type="primary">anmK</name>
    <name type="ordered locus">Bcen_0199</name>
</gene>
<accession>Q1BZ42</accession>
<proteinExistence type="inferred from homology"/>
<evidence type="ECO:0000255" key="1">
    <source>
        <dbReference type="HAMAP-Rule" id="MF_01270"/>
    </source>
</evidence>
<comment type="function">
    <text evidence="1">Catalyzes the specific phosphorylation of 1,6-anhydro-N-acetylmuramic acid (anhMurNAc) with the simultaneous cleavage of the 1,6-anhydro ring, generating MurNAc-6-P. Is required for the utilization of anhMurNAc either imported from the medium or derived from its own cell wall murein, and thus plays a role in cell wall recycling.</text>
</comment>
<comment type="catalytic activity">
    <reaction evidence="1">
        <text>1,6-anhydro-N-acetyl-beta-muramate + ATP + H2O = N-acetyl-D-muramate 6-phosphate + ADP + H(+)</text>
        <dbReference type="Rhea" id="RHEA:24952"/>
        <dbReference type="ChEBI" id="CHEBI:15377"/>
        <dbReference type="ChEBI" id="CHEBI:15378"/>
        <dbReference type="ChEBI" id="CHEBI:30616"/>
        <dbReference type="ChEBI" id="CHEBI:58690"/>
        <dbReference type="ChEBI" id="CHEBI:58722"/>
        <dbReference type="ChEBI" id="CHEBI:456216"/>
        <dbReference type="EC" id="2.7.1.170"/>
    </reaction>
</comment>
<comment type="pathway">
    <text evidence="1">Amino-sugar metabolism; 1,6-anhydro-N-acetylmuramate degradation.</text>
</comment>
<comment type="pathway">
    <text evidence="1">Cell wall biogenesis; peptidoglycan recycling.</text>
</comment>
<comment type="similarity">
    <text evidence="1">Belongs to the anhydro-N-acetylmuramic acid kinase family.</text>
</comment>
<reference key="1">
    <citation type="submission" date="2006-05" db="EMBL/GenBank/DDBJ databases">
        <title>Complete sequence of chromosome 1 of Burkholderia cenocepacia AU 1054.</title>
        <authorList>
            <consortium name="US DOE Joint Genome Institute"/>
            <person name="Copeland A."/>
            <person name="Lucas S."/>
            <person name="Lapidus A."/>
            <person name="Barry K."/>
            <person name="Detter J.C."/>
            <person name="Glavina del Rio T."/>
            <person name="Hammon N."/>
            <person name="Israni S."/>
            <person name="Dalin E."/>
            <person name="Tice H."/>
            <person name="Pitluck S."/>
            <person name="Chain P."/>
            <person name="Malfatti S."/>
            <person name="Shin M."/>
            <person name="Vergez L."/>
            <person name="Schmutz J."/>
            <person name="Larimer F."/>
            <person name="Land M."/>
            <person name="Hauser L."/>
            <person name="Kyrpides N."/>
            <person name="Lykidis A."/>
            <person name="LiPuma J.J."/>
            <person name="Konstantinidis K."/>
            <person name="Tiedje J.M."/>
            <person name="Richardson P."/>
        </authorList>
    </citation>
    <scope>NUCLEOTIDE SEQUENCE [LARGE SCALE GENOMIC DNA]</scope>
    <source>
        <strain>AU 1054</strain>
    </source>
</reference>